<dbReference type="EC" id="3.1.21.7" evidence="1"/>
<dbReference type="EMBL" id="AJ248287">
    <property type="protein sequence ID" value="CAB50287.1"/>
    <property type="molecule type" value="Genomic_DNA"/>
</dbReference>
<dbReference type="EMBL" id="HE613800">
    <property type="protein sequence ID" value="CCE70825.1"/>
    <property type="molecule type" value="Genomic_DNA"/>
</dbReference>
<dbReference type="PIR" id="B75049">
    <property type="entry name" value="B75049"/>
</dbReference>
<dbReference type="RefSeq" id="WP_010868497.1">
    <property type="nucleotide sequence ID" value="NC_000868.1"/>
</dbReference>
<dbReference type="SMR" id="Q9UYX5"/>
<dbReference type="STRING" id="272844.PAB0916"/>
<dbReference type="KEGG" id="pab:PAB0916"/>
<dbReference type="PATRIC" id="fig|272844.11.peg.1469"/>
<dbReference type="eggNOG" id="arCOG00929">
    <property type="taxonomic scope" value="Archaea"/>
</dbReference>
<dbReference type="HOGENOM" id="CLU_047631_1_1_2"/>
<dbReference type="OrthoDB" id="7885at2157"/>
<dbReference type="PhylomeDB" id="Q9UYX5"/>
<dbReference type="Proteomes" id="UP000000810">
    <property type="component" value="Chromosome"/>
</dbReference>
<dbReference type="Proteomes" id="UP000009139">
    <property type="component" value="Chromosome"/>
</dbReference>
<dbReference type="GO" id="GO:0005737">
    <property type="term" value="C:cytoplasm"/>
    <property type="evidence" value="ECO:0007669"/>
    <property type="project" value="UniProtKB-SubCell"/>
</dbReference>
<dbReference type="GO" id="GO:0043737">
    <property type="term" value="F:deoxyribonuclease V activity"/>
    <property type="evidence" value="ECO:0007669"/>
    <property type="project" value="UniProtKB-UniRule"/>
</dbReference>
<dbReference type="GO" id="GO:0000287">
    <property type="term" value="F:magnesium ion binding"/>
    <property type="evidence" value="ECO:0007669"/>
    <property type="project" value="UniProtKB-UniRule"/>
</dbReference>
<dbReference type="GO" id="GO:0016891">
    <property type="term" value="F:RNA endonuclease activity, producing 5'-phosphomonoesters"/>
    <property type="evidence" value="ECO:0007669"/>
    <property type="project" value="TreeGrafter"/>
</dbReference>
<dbReference type="GO" id="GO:0003727">
    <property type="term" value="F:single-stranded RNA binding"/>
    <property type="evidence" value="ECO:0007669"/>
    <property type="project" value="TreeGrafter"/>
</dbReference>
<dbReference type="GO" id="GO:0006281">
    <property type="term" value="P:DNA repair"/>
    <property type="evidence" value="ECO:0007669"/>
    <property type="project" value="UniProtKB-UniRule"/>
</dbReference>
<dbReference type="CDD" id="cd06559">
    <property type="entry name" value="Endonuclease_V"/>
    <property type="match status" value="1"/>
</dbReference>
<dbReference type="Gene3D" id="3.30.2170.10">
    <property type="entry name" value="archaeoglobus fulgidus dsm 4304 superfamily"/>
    <property type="match status" value="1"/>
</dbReference>
<dbReference type="HAMAP" id="MF_00801">
    <property type="entry name" value="Endonuclease_5"/>
    <property type="match status" value="1"/>
</dbReference>
<dbReference type="InterPro" id="IPR007581">
    <property type="entry name" value="Endonuclease-V"/>
</dbReference>
<dbReference type="PANTHER" id="PTHR28511">
    <property type="entry name" value="ENDONUCLEASE V"/>
    <property type="match status" value="1"/>
</dbReference>
<dbReference type="PANTHER" id="PTHR28511:SF1">
    <property type="entry name" value="ENDONUCLEASE V"/>
    <property type="match status" value="1"/>
</dbReference>
<dbReference type="Pfam" id="PF04493">
    <property type="entry name" value="Endonuclease_5"/>
    <property type="match status" value="1"/>
</dbReference>
<name>NFI_PYRAB</name>
<gene>
    <name evidence="1" type="primary">nfi</name>
    <name type="ordered locus">PYRAB13820</name>
    <name type="ORF">PAB0916</name>
</gene>
<evidence type="ECO:0000255" key="1">
    <source>
        <dbReference type="HAMAP-Rule" id="MF_00801"/>
    </source>
</evidence>
<organism>
    <name type="scientific">Pyrococcus abyssi (strain GE5 / Orsay)</name>
    <dbReference type="NCBI Taxonomy" id="272844"/>
    <lineage>
        <taxon>Archaea</taxon>
        <taxon>Methanobacteriati</taxon>
        <taxon>Methanobacteriota</taxon>
        <taxon>Thermococci</taxon>
        <taxon>Thermococcales</taxon>
        <taxon>Thermococcaceae</taxon>
        <taxon>Pyrococcus</taxon>
    </lineage>
</organism>
<comment type="function">
    <text evidence="1">DNA repair enzyme involved in the repair of deaminated bases. Selectively cleaves double-stranded DNA at the second phosphodiester bond 3' to a deoxyinosine leaving behind the intact lesion on the nicked DNA.</text>
</comment>
<comment type="catalytic activity">
    <reaction evidence="1">
        <text>Endonucleolytic cleavage at apurinic or apyrimidinic sites to products with a 5'-phosphate.</text>
        <dbReference type="EC" id="3.1.21.7"/>
    </reaction>
</comment>
<comment type="cofactor">
    <cofactor evidence="1">
        <name>Mg(2+)</name>
        <dbReference type="ChEBI" id="CHEBI:18420"/>
    </cofactor>
</comment>
<comment type="subcellular location">
    <subcellularLocation>
        <location evidence="1">Cytoplasm</location>
    </subcellularLocation>
</comment>
<comment type="similarity">
    <text evidence="1">Belongs to the endonuclease V family.</text>
</comment>
<feature type="chain" id="PRO_0000159689" description="Endonuclease V">
    <location>
        <begin position="1"/>
        <end position="194"/>
    </location>
</feature>
<feature type="binding site" evidence="1">
    <location>
        <position position="31"/>
    </location>
    <ligand>
        <name>Mg(2+)</name>
        <dbReference type="ChEBI" id="CHEBI:18420"/>
    </ligand>
</feature>
<feature type="binding site" evidence="1">
    <location>
        <position position="95"/>
    </location>
    <ligand>
        <name>Mg(2+)</name>
        <dbReference type="ChEBI" id="CHEBI:18420"/>
    </ligand>
</feature>
<feature type="site" description="Interaction with target DNA" evidence="1">
    <location>
        <position position="67"/>
    </location>
</feature>
<proteinExistence type="inferred from homology"/>
<reference key="1">
    <citation type="journal article" date="2003" name="Mol. Microbiol.">
        <title>An integrated analysis of the genome of the hyperthermophilic archaeon Pyrococcus abyssi.</title>
        <authorList>
            <person name="Cohen G.N."/>
            <person name="Barbe V."/>
            <person name="Flament D."/>
            <person name="Galperin M."/>
            <person name="Heilig R."/>
            <person name="Lecompte O."/>
            <person name="Poch O."/>
            <person name="Prieur D."/>
            <person name="Querellou J."/>
            <person name="Ripp R."/>
            <person name="Thierry J.-C."/>
            <person name="Van der Oost J."/>
            <person name="Weissenbach J."/>
            <person name="Zivanovic Y."/>
            <person name="Forterre P."/>
        </authorList>
    </citation>
    <scope>NUCLEOTIDE SEQUENCE [LARGE SCALE GENOMIC DNA]</scope>
    <source>
        <strain>GE5 / Orsay</strain>
    </source>
</reference>
<reference key="2">
    <citation type="journal article" date="2012" name="Curr. Microbiol.">
        <title>Re-annotation of two hyperthermophilic archaea Pyrococcus abyssi GE5 and Pyrococcus furiosus DSM 3638.</title>
        <authorList>
            <person name="Gao J."/>
            <person name="Wang J."/>
        </authorList>
    </citation>
    <scope>GENOME REANNOTATION</scope>
    <source>
        <strain>GE5 / Orsay</strain>
    </source>
</reference>
<accession>Q9UYX5</accession>
<accession>G8ZHI8</accession>
<protein>
    <recommendedName>
        <fullName evidence="1">Endonuclease V</fullName>
        <ecNumber evidence="1">3.1.21.7</ecNumber>
    </recommendedName>
    <alternativeName>
        <fullName evidence="1">Deoxyinosine 3'endonuclease</fullName>
    </alternativeName>
    <alternativeName>
        <fullName evidence="1">Deoxyribonuclease V</fullName>
        <shortName evidence="1">DNase V</shortName>
    </alternativeName>
</protein>
<sequence>MLEKIAEVQKKLSKRIVEKEVRMVSKIAAVDVSYKGNKARVALVICSFPDCKVLKTKVLETEVSFPYIPTFFFLRETRPILLVTKGEEFDVLIVEGHGKAHPRKYGLASHIGLILGKPTIGVAKKLLRGTPENSYRKVGKAYVSVGNMITLKDAVRIIEKLLDGGYPKPLKLADKLSKGKISEDENTLPSDKTS</sequence>
<keyword id="KW-0963">Cytoplasm</keyword>
<keyword id="KW-0227">DNA damage</keyword>
<keyword id="KW-0234">DNA repair</keyword>
<keyword id="KW-0255">Endonuclease</keyword>
<keyword id="KW-0378">Hydrolase</keyword>
<keyword id="KW-0460">Magnesium</keyword>
<keyword id="KW-0479">Metal-binding</keyword>
<keyword id="KW-0540">Nuclease</keyword>